<dbReference type="EC" id="3.2.1.80"/>
<dbReference type="EMBL" id="AL163812">
    <property type="protein sequence ID" value="CAB87665.1"/>
    <property type="status" value="ALT_SEQ"/>
    <property type="molecule type" value="Genomic_DNA"/>
</dbReference>
<dbReference type="EMBL" id="CP002688">
    <property type="protein sequence ID" value="AED91739.1"/>
    <property type="molecule type" value="Genomic_DNA"/>
</dbReference>
<dbReference type="EMBL" id="AY060553">
    <property type="protein sequence ID" value="AAL31183.1"/>
    <property type="molecule type" value="mRNA"/>
</dbReference>
<dbReference type="EMBL" id="AY141991">
    <property type="protein sequence ID" value="AAM98255.1"/>
    <property type="molecule type" value="mRNA"/>
</dbReference>
<dbReference type="PIR" id="T48551">
    <property type="entry name" value="T48551"/>
</dbReference>
<dbReference type="RefSeq" id="NP_568254.1">
    <molecule id="Q8W4S6-1"/>
    <property type="nucleotide sequence ID" value="NM_121230.3"/>
</dbReference>
<dbReference type="SMR" id="Q8W4S6"/>
<dbReference type="FunCoup" id="Q8W4S6">
    <property type="interactions" value="303"/>
</dbReference>
<dbReference type="IntAct" id="Q8W4S6">
    <property type="interactions" value="1"/>
</dbReference>
<dbReference type="STRING" id="3702.Q8W4S6"/>
<dbReference type="CAZy" id="GH32">
    <property type="family name" value="Glycoside Hydrolase Family 32"/>
</dbReference>
<dbReference type="GlyCosmos" id="Q8W4S6">
    <property type="glycosylation" value="2 sites, No reported glycans"/>
</dbReference>
<dbReference type="GlyGen" id="Q8W4S6">
    <property type="glycosylation" value="2 sites"/>
</dbReference>
<dbReference type="PaxDb" id="3702-AT5G11920.1"/>
<dbReference type="EnsemblPlants" id="AT5G11920.1">
    <molecule id="Q8W4S6-1"/>
    <property type="protein sequence ID" value="AT5G11920.1"/>
    <property type="gene ID" value="AT5G11920"/>
</dbReference>
<dbReference type="GeneID" id="831065"/>
<dbReference type="Gramene" id="AT5G11920.1">
    <molecule id="Q8W4S6-1"/>
    <property type="protein sequence ID" value="AT5G11920.1"/>
    <property type="gene ID" value="AT5G11920"/>
</dbReference>
<dbReference type="KEGG" id="ath:AT5G11920"/>
<dbReference type="Araport" id="AT5G11920"/>
<dbReference type="TAIR" id="AT5G11920">
    <property type="gene designation" value="CWINV6"/>
</dbReference>
<dbReference type="eggNOG" id="KOG0228">
    <property type="taxonomic scope" value="Eukaryota"/>
</dbReference>
<dbReference type="HOGENOM" id="CLU_001528_6_0_1"/>
<dbReference type="InParanoid" id="Q8W4S6"/>
<dbReference type="OMA" id="HDTIAGE"/>
<dbReference type="PhylomeDB" id="Q8W4S6"/>
<dbReference type="BioCyc" id="ARA:AT5G11920-MONOMER"/>
<dbReference type="PRO" id="PR:Q8W4S6"/>
<dbReference type="Proteomes" id="UP000006548">
    <property type="component" value="Chromosome 5"/>
</dbReference>
<dbReference type="ExpressionAtlas" id="Q8W4S6">
    <property type="expression patterns" value="baseline and differential"/>
</dbReference>
<dbReference type="GO" id="GO:0048046">
    <property type="term" value="C:apoplast"/>
    <property type="evidence" value="ECO:0007669"/>
    <property type="project" value="UniProtKB-SubCell"/>
</dbReference>
<dbReference type="GO" id="GO:0051669">
    <property type="term" value="F:fructan beta-fructosidase activity"/>
    <property type="evidence" value="ECO:0007669"/>
    <property type="project" value="UniProtKB-EC"/>
</dbReference>
<dbReference type="GO" id="GO:0005975">
    <property type="term" value="P:carbohydrate metabolic process"/>
    <property type="evidence" value="ECO:0007669"/>
    <property type="project" value="InterPro"/>
</dbReference>
<dbReference type="CDD" id="cd18624">
    <property type="entry name" value="GH32_Fruct1-like"/>
    <property type="match status" value="1"/>
</dbReference>
<dbReference type="Gene3D" id="2.60.120.560">
    <property type="entry name" value="Exo-inulinase, domain 1"/>
    <property type="match status" value="1"/>
</dbReference>
<dbReference type="Gene3D" id="2.115.10.20">
    <property type="entry name" value="Glycosyl hydrolase domain, family 43"/>
    <property type="match status" value="1"/>
</dbReference>
<dbReference type="InterPro" id="IPR013320">
    <property type="entry name" value="ConA-like_dom_sf"/>
</dbReference>
<dbReference type="InterPro" id="IPR050551">
    <property type="entry name" value="Fructan_Metab_Enzymes"/>
</dbReference>
<dbReference type="InterPro" id="IPR001362">
    <property type="entry name" value="Glyco_hydro_32"/>
</dbReference>
<dbReference type="InterPro" id="IPR018053">
    <property type="entry name" value="Glyco_hydro_32_AS"/>
</dbReference>
<dbReference type="InterPro" id="IPR013189">
    <property type="entry name" value="Glyco_hydro_32_C"/>
</dbReference>
<dbReference type="InterPro" id="IPR013148">
    <property type="entry name" value="Glyco_hydro_32_N"/>
</dbReference>
<dbReference type="InterPro" id="IPR023296">
    <property type="entry name" value="Glyco_hydro_beta-prop_sf"/>
</dbReference>
<dbReference type="PANTHER" id="PTHR31953">
    <property type="entry name" value="BETA-FRUCTOFURANOSIDASE, INSOLUBLE ISOENZYME CWINV1-RELATED"/>
    <property type="match status" value="1"/>
</dbReference>
<dbReference type="Pfam" id="PF08244">
    <property type="entry name" value="Glyco_hydro_32C"/>
    <property type="match status" value="1"/>
</dbReference>
<dbReference type="Pfam" id="PF00251">
    <property type="entry name" value="Glyco_hydro_32N"/>
    <property type="match status" value="1"/>
</dbReference>
<dbReference type="SMART" id="SM00640">
    <property type="entry name" value="Glyco_32"/>
    <property type="match status" value="1"/>
</dbReference>
<dbReference type="SUPFAM" id="SSF75005">
    <property type="entry name" value="Arabinanase/levansucrase/invertase"/>
    <property type="match status" value="1"/>
</dbReference>
<dbReference type="SUPFAM" id="SSF49899">
    <property type="entry name" value="Concanavalin A-like lectins/glucanases"/>
    <property type="match status" value="1"/>
</dbReference>
<dbReference type="PROSITE" id="PS00609">
    <property type="entry name" value="GLYCOSYL_HYDROL_F32"/>
    <property type="match status" value="1"/>
</dbReference>
<organism>
    <name type="scientific">Arabidopsis thaliana</name>
    <name type="common">Mouse-ear cress</name>
    <dbReference type="NCBI Taxonomy" id="3702"/>
    <lineage>
        <taxon>Eukaryota</taxon>
        <taxon>Viridiplantae</taxon>
        <taxon>Streptophyta</taxon>
        <taxon>Embryophyta</taxon>
        <taxon>Tracheophyta</taxon>
        <taxon>Spermatophyta</taxon>
        <taxon>Magnoliopsida</taxon>
        <taxon>eudicotyledons</taxon>
        <taxon>Gunneridae</taxon>
        <taxon>Pentapetalae</taxon>
        <taxon>rosids</taxon>
        <taxon>malvids</taxon>
        <taxon>Brassicales</taxon>
        <taxon>Brassicaceae</taxon>
        <taxon>Camelineae</taxon>
        <taxon>Arabidopsis</taxon>
    </lineage>
</organism>
<name>INV6_ARATH</name>
<keyword id="KW-0025">Alternative splicing</keyword>
<keyword id="KW-0052">Apoplast</keyword>
<keyword id="KW-0134">Cell wall</keyword>
<keyword id="KW-0325">Glycoprotein</keyword>
<keyword id="KW-0326">Glycosidase</keyword>
<keyword id="KW-0378">Hydrolase</keyword>
<keyword id="KW-1185">Reference proteome</keyword>
<keyword id="KW-0964">Secreted</keyword>
<keyword id="KW-0732">Signal</keyword>
<gene>
    <name type="primary">CWINV6</name>
    <name type="ordered locus">At5g11920</name>
    <name type="ORF">F14F18.90</name>
</gene>
<feature type="signal peptide" evidence="2">
    <location>
        <begin position="1"/>
        <end status="unknown"/>
    </location>
</feature>
<feature type="chain" id="PRO_0000348352" description="Beta-fructofuranosidase, insoluble isoenzyme CWINV6">
    <location>
        <begin status="unknown"/>
        <end position="550"/>
    </location>
</feature>
<feature type="active site" evidence="3">
    <location>
        <position position="31"/>
    </location>
</feature>
<feature type="binding site" evidence="1">
    <location>
        <begin position="28"/>
        <end position="31"/>
    </location>
    <ligand>
        <name>substrate</name>
    </ligand>
</feature>
<feature type="binding site" evidence="1">
    <location>
        <position position="47"/>
    </location>
    <ligand>
        <name>substrate</name>
    </ligand>
</feature>
<feature type="binding site" evidence="1">
    <location>
        <begin position="92"/>
        <end position="93"/>
    </location>
    <ligand>
        <name>substrate</name>
    </ligand>
</feature>
<feature type="binding site" evidence="1">
    <location>
        <begin position="157"/>
        <end position="158"/>
    </location>
    <ligand>
        <name>substrate</name>
    </ligand>
</feature>
<feature type="binding site" evidence="1">
    <location>
        <position position="214"/>
    </location>
    <ligand>
        <name>substrate</name>
    </ligand>
</feature>
<feature type="glycosylation site" description="N-linked (GlcNAc...) asparagine" evidence="2">
    <location>
        <position position="235"/>
    </location>
</feature>
<feature type="glycosylation site" description="N-linked (GlcNAc...) asparagine" evidence="2">
    <location>
        <position position="272"/>
    </location>
</feature>
<feature type="splice variant" id="VSP_035148" description="In isoform 2." evidence="6">
    <original>RDSSVGCVYGPFGLLALASSDLSEQTAIFFKVIRRGNGYAVVMCSSEKRSSLRDNIKKSSHGAFLDIDPRHEKISLRCLIDHSIIESYGVGGKTVITSRVYPKLAIGEAAKLYVFNDGENGVIMTSLEAWSMRNAQINSNPT</original>
    <variation>HRSLDYRELRSRRKNCDNI</variation>
    <location>
        <begin position="408"/>
        <end position="549"/>
    </location>
</feature>
<sequence length="550" mass="62098">MADVMEQNLLQTAVLNRTSFHFQPQRNWLNDPNAPMYYKGFYHLFYQNNPLAPEFSRTRIIWGHSVSQDMVNWIQLEPALVPSESFDINSCWSGSATILPDGRPVILYTGLDVNNKQQVTVVAEPKDVSDPLLREWVKPKYNPVMVPPSNVPFNCFRDPTEAWKGQDGKWRVLIGAKEKDTEKGMAILYRSDDFVQWTKYPVPLLESEGTGMWECPDFFPVSITGKEGVDTSVNNASVRHVLKASFGGNDCYVIGKYSSETEDFSADYEFTNTSADLRYDHGTFYASKAFFDSVKNRRINWGWVIETDSKEDDFKKGWAGLMTLPREIWMDTSGKKLMQWPIEEINNLRTKSVSLDDCYEFKTGSTFEISGITAAQADVEVTFNLPFLENNPEILDADQVDDATLFDRDSSVGCVYGPFGLLALASSDLSEQTAIFFKVIRRGNGYAVVMCSSEKRSSLRDNIKKSSHGAFLDIDPRHEKISLRCLIDHSIIESYGVGGKTVITSRVYPKLAIGEAAKLYVFNDGENGVIMTSLEAWSMRNAQINSNPTY</sequence>
<comment type="function">
    <text evidence="5">6 and 1-fructan exohydrolase that can degrade both inulin and levan-type fructans, such as phlein, levan, neokestose, levanbiose, 6-kestose, 1-kestose, inulin, and 1,1-nystose.</text>
</comment>
<comment type="catalytic activity">
    <reaction>
        <text>Hydrolysis of terminal, non-reducing (2-&gt;1)- and (2-&gt;6)-linked beta-D-fructofuranose residues in fructans.</text>
        <dbReference type="EC" id="3.2.1.80"/>
    </reaction>
</comment>
<comment type="subcellular location">
    <subcellularLocation>
        <location evidence="6">Secreted</location>
        <location evidence="6">Extracellular space</location>
        <location evidence="6">Apoplast</location>
    </subcellularLocation>
    <subcellularLocation>
        <location evidence="6">Secreted</location>
        <location evidence="6">Cell wall</location>
    </subcellularLocation>
    <text evidence="6">Associated to the cell wall.</text>
</comment>
<comment type="alternative products">
    <event type="alternative splicing"/>
    <isoform>
        <id>Q8W4S6-1</id>
        <name>1</name>
        <sequence type="displayed"/>
    </isoform>
    <isoform>
        <id>Q8W4S6-2</id>
        <name>2</name>
        <sequence type="described" ref="VSP_035148"/>
    </isoform>
</comment>
<comment type="tissue specificity">
    <text evidence="4">Expressed in seedlings and leaves, and, to a lower extent, in flowers and seeds.</text>
</comment>
<comment type="similarity">
    <text evidence="6">Belongs to the glycosyl hydrolase 32 family.</text>
</comment>
<comment type="caution">
    <text evidence="6">Seems to not have any beta-fructofuranosidase activity.</text>
</comment>
<comment type="sequence caution" evidence="6">
    <conflict type="erroneous gene model prediction">
        <sequence resource="EMBL-CDS" id="CAB87665"/>
    </conflict>
</comment>
<proteinExistence type="evidence at transcript level"/>
<accession>Q8W4S6</accession>
<accession>A8MQQ0</accession>
<accession>Q9LYI1</accession>
<evidence type="ECO:0000250" key="1"/>
<evidence type="ECO:0000255" key="2"/>
<evidence type="ECO:0000255" key="3">
    <source>
        <dbReference type="PROSITE-ProRule" id="PRU10067"/>
    </source>
</evidence>
<evidence type="ECO:0000269" key="4">
    <source>
    </source>
</evidence>
<evidence type="ECO:0000269" key="5">
    <source ref="5"/>
</evidence>
<evidence type="ECO:0000305" key="6"/>
<protein>
    <recommendedName>
        <fullName>Beta-fructofuranosidase, insoluble isoenzyme CWINV6</fullName>
    </recommendedName>
    <alternativeName>
        <fullName>6 and 1-fructan exohydrolase</fullName>
        <shortName>6&amp;1-FEH</shortName>
        <ecNumber>3.2.1.80</ecNumber>
    </alternativeName>
    <alternativeName>
        <fullName>Cell wall beta-fructosidase 6</fullName>
    </alternativeName>
    <alternativeName>
        <fullName>Cell wall invertase 6</fullName>
        <shortName>AtcwINV6</shortName>
    </alternativeName>
    <alternativeName>
        <fullName>Sucrose hydrolase 6</fullName>
    </alternativeName>
</protein>
<reference key="1">
    <citation type="journal article" date="2000" name="Nature">
        <title>Sequence and analysis of chromosome 5 of the plant Arabidopsis thaliana.</title>
        <authorList>
            <person name="Tabata S."/>
            <person name="Kaneko T."/>
            <person name="Nakamura Y."/>
            <person name="Kotani H."/>
            <person name="Kato T."/>
            <person name="Asamizu E."/>
            <person name="Miyajima N."/>
            <person name="Sasamoto S."/>
            <person name="Kimura T."/>
            <person name="Hosouchi T."/>
            <person name="Kawashima K."/>
            <person name="Kohara M."/>
            <person name="Matsumoto M."/>
            <person name="Matsuno A."/>
            <person name="Muraki A."/>
            <person name="Nakayama S."/>
            <person name="Nakazaki N."/>
            <person name="Naruo K."/>
            <person name="Okumura S."/>
            <person name="Shinpo S."/>
            <person name="Takeuchi C."/>
            <person name="Wada T."/>
            <person name="Watanabe A."/>
            <person name="Yamada M."/>
            <person name="Yasuda M."/>
            <person name="Sato S."/>
            <person name="de la Bastide M."/>
            <person name="Huang E."/>
            <person name="Spiegel L."/>
            <person name="Gnoj L."/>
            <person name="O'Shaughnessy A."/>
            <person name="Preston R."/>
            <person name="Habermann K."/>
            <person name="Murray J."/>
            <person name="Johnson D."/>
            <person name="Rohlfing T."/>
            <person name="Nelson J."/>
            <person name="Stoneking T."/>
            <person name="Pepin K."/>
            <person name="Spieth J."/>
            <person name="Sekhon M."/>
            <person name="Armstrong J."/>
            <person name="Becker M."/>
            <person name="Belter E."/>
            <person name="Cordum H."/>
            <person name="Cordes M."/>
            <person name="Courtney L."/>
            <person name="Courtney W."/>
            <person name="Dante M."/>
            <person name="Du H."/>
            <person name="Edwards J."/>
            <person name="Fryman J."/>
            <person name="Haakensen B."/>
            <person name="Lamar E."/>
            <person name="Latreille P."/>
            <person name="Leonard S."/>
            <person name="Meyer R."/>
            <person name="Mulvaney E."/>
            <person name="Ozersky P."/>
            <person name="Riley A."/>
            <person name="Strowmatt C."/>
            <person name="Wagner-McPherson C."/>
            <person name="Wollam A."/>
            <person name="Yoakum M."/>
            <person name="Bell M."/>
            <person name="Dedhia N."/>
            <person name="Parnell L."/>
            <person name="Shah R."/>
            <person name="Rodriguez M."/>
            <person name="Hoon See L."/>
            <person name="Vil D."/>
            <person name="Baker J."/>
            <person name="Kirchoff K."/>
            <person name="Toth K."/>
            <person name="King L."/>
            <person name="Bahret A."/>
            <person name="Miller B."/>
            <person name="Marra M.A."/>
            <person name="Martienssen R."/>
            <person name="McCombie W.R."/>
            <person name="Wilson R.K."/>
            <person name="Murphy G."/>
            <person name="Bancroft I."/>
            <person name="Volckaert G."/>
            <person name="Wambutt R."/>
            <person name="Duesterhoeft A."/>
            <person name="Stiekema W."/>
            <person name="Pohl T."/>
            <person name="Entian K.-D."/>
            <person name="Terryn N."/>
            <person name="Hartley N."/>
            <person name="Bent E."/>
            <person name="Johnson S."/>
            <person name="Langham S.-A."/>
            <person name="McCullagh B."/>
            <person name="Robben J."/>
            <person name="Grymonprez B."/>
            <person name="Zimmermann W."/>
            <person name="Ramsperger U."/>
            <person name="Wedler H."/>
            <person name="Balke K."/>
            <person name="Wedler E."/>
            <person name="Peters S."/>
            <person name="van Staveren M."/>
            <person name="Dirkse W."/>
            <person name="Mooijman P."/>
            <person name="Klein Lankhorst R."/>
            <person name="Weitzenegger T."/>
            <person name="Bothe G."/>
            <person name="Rose M."/>
            <person name="Hauf J."/>
            <person name="Berneiser S."/>
            <person name="Hempel S."/>
            <person name="Feldpausch M."/>
            <person name="Lamberth S."/>
            <person name="Villarroel R."/>
            <person name="Gielen J."/>
            <person name="Ardiles W."/>
            <person name="Bents O."/>
            <person name="Lemcke K."/>
            <person name="Kolesov G."/>
            <person name="Mayer K.F.X."/>
            <person name="Rudd S."/>
            <person name="Schoof H."/>
            <person name="Schueller C."/>
            <person name="Zaccaria P."/>
            <person name="Mewes H.-W."/>
            <person name="Bevan M."/>
            <person name="Fransz P.F."/>
        </authorList>
    </citation>
    <scope>NUCLEOTIDE SEQUENCE [LARGE SCALE GENOMIC DNA]</scope>
    <source>
        <strain>cv. Columbia</strain>
    </source>
</reference>
<reference key="2">
    <citation type="journal article" date="2017" name="Plant J.">
        <title>Araport11: a complete reannotation of the Arabidopsis thaliana reference genome.</title>
        <authorList>
            <person name="Cheng C.Y."/>
            <person name="Krishnakumar V."/>
            <person name="Chan A.P."/>
            <person name="Thibaud-Nissen F."/>
            <person name="Schobel S."/>
            <person name="Town C.D."/>
        </authorList>
    </citation>
    <scope>GENOME REANNOTATION</scope>
    <source>
        <strain>cv. Columbia</strain>
    </source>
</reference>
<reference key="3">
    <citation type="journal article" date="2003" name="Science">
        <title>Empirical analysis of transcriptional activity in the Arabidopsis genome.</title>
        <authorList>
            <person name="Yamada K."/>
            <person name="Lim J."/>
            <person name="Dale J.M."/>
            <person name="Chen H."/>
            <person name="Shinn P."/>
            <person name="Palm C.J."/>
            <person name="Southwick A.M."/>
            <person name="Wu H.C."/>
            <person name="Kim C.J."/>
            <person name="Nguyen M."/>
            <person name="Pham P.K."/>
            <person name="Cheuk R.F."/>
            <person name="Karlin-Newmann G."/>
            <person name="Liu S.X."/>
            <person name="Lam B."/>
            <person name="Sakano H."/>
            <person name="Wu T."/>
            <person name="Yu G."/>
            <person name="Miranda M."/>
            <person name="Quach H.L."/>
            <person name="Tripp M."/>
            <person name="Chang C.H."/>
            <person name="Lee J.M."/>
            <person name="Toriumi M.J."/>
            <person name="Chan M.M."/>
            <person name="Tang C.C."/>
            <person name="Onodera C.S."/>
            <person name="Deng J.M."/>
            <person name="Akiyama K."/>
            <person name="Ansari Y."/>
            <person name="Arakawa T."/>
            <person name="Banh J."/>
            <person name="Banno F."/>
            <person name="Bowser L."/>
            <person name="Brooks S.Y."/>
            <person name="Carninci P."/>
            <person name="Chao Q."/>
            <person name="Choy N."/>
            <person name="Enju A."/>
            <person name="Goldsmith A.D."/>
            <person name="Gurjal M."/>
            <person name="Hansen N.F."/>
            <person name="Hayashizaki Y."/>
            <person name="Johnson-Hopson C."/>
            <person name="Hsuan V.W."/>
            <person name="Iida K."/>
            <person name="Karnes M."/>
            <person name="Khan S."/>
            <person name="Koesema E."/>
            <person name="Ishida J."/>
            <person name="Jiang P.X."/>
            <person name="Jones T."/>
            <person name="Kawai J."/>
            <person name="Kamiya A."/>
            <person name="Meyers C."/>
            <person name="Nakajima M."/>
            <person name="Narusaka M."/>
            <person name="Seki M."/>
            <person name="Sakurai T."/>
            <person name="Satou M."/>
            <person name="Tamse R."/>
            <person name="Vaysberg M."/>
            <person name="Wallender E.K."/>
            <person name="Wong C."/>
            <person name="Yamamura Y."/>
            <person name="Yuan S."/>
            <person name="Shinozaki K."/>
            <person name="Davis R.W."/>
            <person name="Theologis A."/>
            <person name="Ecker J.R."/>
        </authorList>
    </citation>
    <scope>NUCLEOTIDE SEQUENCE [LARGE SCALE MRNA] (ISOFORM 1)</scope>
    <source>
        <strain>cv. Columbia</strain>
    </source>
</reference>
<reference key="4">
    <citation type="journal article" date="2003" name="J. Exp. Bot.">
        <title>Roles of cell-wall invertases and monosaccharide transporters in the growth and development of Arabidopsis.</title>
        <authorList>
            <person name="Sherson S.M."/>
            <person name="Alford H.L."/>
            <person name="Forbes S.M."/>
            <person name="Wallace G."/>
            <person name="Smith S.M."/>
        </authorList>
    </citation>
    <scope>TISSUE SPECIFICITY</scope>
    <scope>GENE FAMILY</scope>
    <scope>NOMENCLATURE</scope>
</reference>
<reference key="5">
    <citation type="journal article" date="2005" name="Plant Cell Environ.">
        <title>Arabidopsis AtcwINV3 and 6 are not invertases but are fructan exohydrolases (FEHs) with different substrate specificities.</title>
        <authorList>
            <person name="de Coninck B."/>
            <person name="Le Roy K."/>
            <person name="Francis I."/>
            <person name="Clerens S."/>
            <person name="Vergauwen R."/>
            <person name="Halliday A.M."/>
            <person name="Smith S.M."/>
            <person name="Van Laere A."/>
            <person name="Van Den Ende W."/>
        </authorList>
    </citation>
    <scope>FUNCTION</scope>
</reference>